<evidence type="ECO:0000250" key="1"/>
<evidence type="ECO:0000256" key="2">
    <source>
        <dbReference type="SAM" id="MobiDB-lite"/>
    </source>
</evidence>
<evidence type="ECO:0000305" key="3"/>
<name>FLGM_YERE8</name>
<dbReference type="EMBL" id="U16136">
    <property type="protein sequence ID" value="AAC43968.1"/>
    <property type="molecule type" value="Genomic_DNA"/>
</dbReference>
<dbReference type="EMBL" id="U37141">
    <property type="protein sequence ID" value="AAB52955.1"/>
    <property type="molecule type" value="Genomic_DNA"/>
</dbReference>
<dbReference type="EMBL" id="AM286415">
    <property type="protein sequence ID" value="CAL12603.1"/>
    <property type="status" value="ALT_INIT"/>
    <property type="molecule type" value="Genomic_DNA"/>
</dbReference>
<dbReference type="PIR" id="S71021">
    <property type="entry name" value="S71021"/>
</dbReference>
<dbReference type="RefSeq" id="WP_005168786.1">
    <property type="nucleotide sequence ID" value="NC_008800.1"/>
</dbReference>
<dbReference type="RefSeq" id="YP_001006766.1">
    <property type="nucleotide sequence ID" value="NC_008800.1"/>
</dbReference>
<dbReference type="SMR" id="A1JT31"/>
<dbReference type="KEGG" id="yen:YE2562"/>
<dbReference type="PATRIC" id="fig|393305.7.peg.2720"/>
<dbReference type="eggNOG" id="COG2747">
    <property type="taxonomic scope" value="Bacteria"/>
</dbReference>
<dbReference type="HOGENOM" id="CLU_149304_2_2_6"/>
<dbReference type="OrthoDB" id="7062942at2"/>
<dbReference type="Proteomes" id="UP000000642">
    <property type="component" value="Chromosome"/>
</dbReference>
<dbReference type="GO" id="GO:0044781">
    <property type="term" value="P:bacterial-type flagellum organization"/>
    <property type="evidence" value="ECO:0007669"/>
    <property type="project" value="UniProtKB-KW"/>
</dbReference>
<dbReference type="GO" id="GO:0045892">
    <property type="term" value="P:negative regulation of DNA-templated transcription"/>
    <property type="evidence" value="ECO:0007669"/>
    <property type="project" value="InterPro"/>
</dbReference>
<dbReference type="InterPro" id="IPR035890">
    <property type="entry name" value="Anti-sigma-28_factor_FlgM_sf"/>
</dbReference>
<dbReference type="InterPro" id="IPR007412">
    <property type="entry name" value="FlgM"/>
</dbReference>
<dbReference type="InterPro" id="IPR031316">
    <property type="entry name" value="FlgM_C"/>
</dbReference>
<dbReference type="NCBIfam" id="TIGR03824">
    <property type="entry name" value="FlgM_jcvi"/>
    <property type="match status" value="1"/>
</dbReference>
<dbReference type="Pfam" id="PF04316">
    <property type="entry name" value="FlgM"/>
    <property type="match status" value="1"/>
</dbReference>
<dbReference type="SUPFAM" id="SSF101498">
    <property type="entry name" value="Anti-sigma factor FlgM"/>
    <property type="match status" value="1"/>
</dbReference>
<comment type="function">
    <text evidence="1">Responsible for the coupling of flagellin expression to flagellar assembly by preventing expression of the flagellin genes when a component of the middle class of proteins is defective. It negatively regulates flagellar genes by inhibiting the activity of FliA by directly binding to FliA (By similarity).</text>
</comment>
<comment type="similarity">
    <text evidence="3">Belongs to the FlgM family.</text>
</comment>
<comment type="sequence caution" evidence="3">
    <conflict type="erroneous initiation">
        <sequence resource="EMBL-CDS" id="CAL12603"/>
    </conflict>
</comment>
<sequence>MSIDRTQPLLPVTPVQPRETSDIAQQTRKPSAQSKTPVSGTEVKLSDAQAKLMQPGSQDINVERVETLKQAIRSGQLTMDTGKIADALLKNVADDLKNS</sequence>
<feature type="chain" id="PRO_0000285830" description="Negative regulator of flagellin synthesis">
    <location>
        <begin position="1"/>
        <end position="99"/>
    </location>
</feature>
<feature type="region of interest" description="Disordered" evidence="2">
    <location>
        <begin position="1"/>
        <end position="42"/>
    </location>
</feature>
<feature type="compositionally biased region" description="Polar residues" evidence="2">
    <location>
        <begin position="22"/>
        <end position="39"/>
    </location>
</feature>
<keyword id="KW-1005">Bacterial flagellum biogenesis</keyword>
<keyword id="KW-0678">Repressor</keyword>
<keyword id="KW-0804">Transcription</keyword>
<keyword id="KW-0805">Transcription regulation</keyword>
<accession>A1JT31</accession>
<accession>Q56891</accession>
<accession>Q57401</accession>
<protein>
    <recommendedName>
        <fullName>Negative regulator of flagellin synthesis</fullName>
    </recommendedName>
    <alternativeName>
        <fullName>Anti-sigma-28 factor</fullName>
    </alternativeName>
</protein>
<gene>
    <name type="primary">flgM</name>
    <name type="ordered locus">YE2562</name>
</gene>
<proteinExistence type="inferred from homology"/>
<reference key="1">
    <citation type="journal article" date="1996" name="Mol. Microbiol.">
        <title>Temperature-dependent regulation of Yersinia enterocolitica class III flagellar genes.</title>
        <authorList>
            <person name="Kapatral V."/>
            <person name="Olson J.W."/>
            <person name="Pepe J.C."/>
            <person name="Miller V.L."/>
            <person name="Minnich S.A."/>
        </authorList>
    </citation>
    <scope>NUCLEOTIDE SEQUENCE [GENOMIC DNA]</scope>
</reference>
<reference key="2">
    <citation type="journal article" date="2006" name="PLoS Genet.">
        <title>The complete genome sequence and comparative genome analysis of the high pathogenicity Yersinia enterocolitica strain 8081.</title>
        <authorList>
            <person name="Thomson N.R."/>
            <person name="Howard S."/>
            <person name="Wren B.W."/>
            <person name="Holden M.T.G."/>
            <person name="Crossman L."/>
            <person name="Challis G.L."/>
            <person name="Churcher C."/>
            <person name="Mungall K."/>
            <person name="Brooks K."/>
            <person name="Chillingworth T."/>
            <person name="Feltwell T."/>
            <person name="Abdellah Z."/>
            <person name="Hauser H."/>
            <person name="Jagels K."/>
            <person name="Maddison M."/>
            <person name="Moule S."/>
            <person name="Sanders M."/>
            <person name="Whitehead S."/>
            <person name="Quail M.A."/>
            <person name="Dougan G."/>
            <person name="Parkhill J."/>
            <person name="Prentice M.B."/>
        </authorList>
    </citation>
    <scope>NUCLEOTIDE SEQUENCE [LARGE SCALE GENOMIC DNA]</scope>
    <source>
        <strain>NCTC 13174 / 8081</strain>
    </source>
</reference>
<organism>
    <name type="scientific">Yersinia enterocolitica serotype O:8 / biotype 1B (strain NCTC 13174 / 8081)</name>
    <dbReference type="NCBI Taxonomy" id="393305"/>
    <lineage>
        <taxon>Bacteria</taxon>
        <taxon>Pseudomonadati</taxon>
        <taxon>Pseudomonadota</taxon>
        <taxon>Gammaproteobacteria</taxon>
        <taxon>Enterobacterales</taxon>
        <taxon>Yersiniaceae</taxon>
        <taxon>Yersinia</taxon>
    </lineage>
</organism>